<keyword id="KW-0067">ATP-binding</keyword>
<keyword id="KW-0131">Cell cycle</keyword>
<keyword id="KW-0132">Cell division</keyword>
<keyword id="KW-0133">Cell shape</keyword>
<keyword id="KW-0961">Cell wall biogenesis/degradation</keyword>
<keyword id="KW-0963">Cytoplasm</keyword>
<keyword id="KW-0436">Ligase</keyword>
<keyword id="KW-0547">Nucleotide-binding</keyword>
<keyword id="KW-0573">Peptidoglycan synthesis</keyword>
<comment type="function">
    <text evidence="1">Cell wall formation.</text>
</comment>
<comment type="catalytic activity">
    <reaction evidence="1">
        <text>UDP-N-acetyl-alpha-D-muramate + L-alanine + ATP = UDP-N-acetyl-alpha-D-muramoyl-L-alanine + ADP + phosphate + H(+)</text>
        <dbReference type="Rhea" id="RHEA:23372"/>
        <dbReference type="ChEBI" id="CHEBI:15378"/>
        <dbReference type="ChEBI" id="CHEBI:30616"/>
        <dbReference type="ChEBI" id="CHEBI:43474"/>
        <dbReference type="ChEBI" id="CHEBI:57972"/>
        <dbReference type="ChEBI" id="CHEBI:70757"/>
        <dbReference type="ChEBI" id="CHEBI:83898"/>
        <dbReference type="ChEBI" id="CHEBI:456216"/>
        <dbReference type="EC" id="6.3.2.8"/>
    </reaction>
</comment>
<comment type="pathway">
    <text evidence="1">Cell wall biogenesis; peptidoglycan biosynthesis.</text>
</comment>
<comment type="subcellular location">
    <subcellularLocation>
        <location evidence="1">Cytoplasm</location>
    </subcellularLocation>
</comment>
<comment type="similarity">
    <text evidence="1">Belongs to the MurCDEF family.</text>
</comment>
<gene>
    <name evidence="1" type="primary">murC</name>
    <name type="ordered locus">BMASAVP1_A0471</name>
</gene>
<feature type="chain" id="PRO_1000004322" description="UDP-N-acetylmuramate--L-alanine ligase">
    <location>
        <begin position="1"/>
        <end position="465"/>
    </location>
</feature>
<feature type="binding site" evidence="1">
    <location>
        <begin position="112"/>
        <end position="118"/>
    </location>
    <ligand>
        <name>ATP</name>
        <dbReference type="ChEBI" id="CHEBI:30616"/>
    </ligand>
</feature>
<dbReference type="EC" id="6.3.2.8" evidence="1"/>
<dbReference type="EMBL" id="CP000526">
    <property type="protein sequence ID" value="ABM50864.1"/>
    <property type="molecule type" value="Genomic_DNA"/>
</dbReference>
<dbReference type="RefSeq" id="WP_004194319.1">
    <property type="nucleotide sequence ID" value="NC_008785.1"/>
</dbReference>
<dbReference type="SMR" id="A1V0R7"/>
<dbReference type="GeneID" id="92980242"/>
<dbReference type="KEGG" id="bmv:BMASAVP1_A0471"/>
<dbReference type="HOGENOM" id="CLU_028104_2_2_4"/>
<dbReference type="UniPathway" id="UPA00219"/>
<dbReference type="GO" id="GO:0005737">
    <property type="term" value="C:cytoplasm"/>
    <property type="evidence" value="ECO:0007669"/>
    <property type="project" value="UniProtKB-SubCell"/>
</dbReference>
<dbReference type="GO" id="GO:0005524">
    <property type="term" value="F:ATP binding"/>
    <property type="evidence" value="ECO:0007669"/>
    <property type="project" value="UniProtKB-UniRule"/>
</dbReference>
<dbReference type="GO" id="GO:0008763">
    <property type="term" value="F:UDP-N-acetylmuramate-L-alanine ligase activity"/>
    <property type="evidence" value="ECO:0007669"/>
    <property type="project" value="UniProtKB-UniRule"/>
</dbReference>
<dbReference type="GO" id="GO:0051301">
    <property type="term" value="P:cell division"/>
    <property type="evidence" value="ECO:0007669"/>
    <property type="project" value="UniProtKB-KW"/>
</dbReference>
<dbReference type="GO" id="GO:0071555">
    <property type="term" value="P:cell wall organization"/>
    <property type="evidence" value="ECO:0007669"/>
    <property type="project" value="UniProtKB-KW"/>
</dbReference>
<dbReference type="GO" id="GO:0009252">
    <property type="term" value="P:peptidoglycan biosynthetic process"/>
    <property type="evidence" value="ECO:0007669"/>
    <property type="project" value="UniProtKB-UniRule"/>
</dbReference>
<dbReference type="GO" id="GO:0008360">
    <property type="term" value="P:regulation of cell shape"/>
    <property type="evidence" value="ECO:0007669"/>
    <property type="project" value="UniProtKB-KW"/>
</dbReference>
<dbReference type="FunFam" id="3.40.1190.10:FF:000001">
    <property type="entry name" value="UDP-N-acetylmuramate--L-alanine ligase"/>
    <property type="match status" value="1"/>
</dbReference>
<dbReference type="Gene3D" id="3.90.190.20">
    <property type="entry name" value="Mur ligase, C-terminal domain"/>
    <property type="match status" value="1"/>
</dbReference>
<dbReference type="Gene3D" id="3.40.1190.10">
    <property type="entry name" value="Mur-like, catalytic domain"/>
    <property type="match status" value="1"/>
</dbReference>
<dbReference type="Gene3D" id="3.40.50.720">
    <property type="entry name" value="NAD(P)-binding Rossmann-like Domain"/>
    <property type="match status" value="1"/>
</dbReference>
<dbReference type="HAMAP" id="MF_00046">
    <property type="entry name" value="MurC"/>
    <property type="match status" value="1"/>
</dbReference>
<dbReference type="InterPro" id="IPR036565">
    <property type="entry name" value="Mur-like_cat_sf"/>
</dbReference>
<dbReference type="InterPro" id="IPR004101">
    <property type="entry name" value="Mur_ligase_C"/>
</dbReference>
<dbReference type="InterPro" id="IPR036615">
    <property type="entry name" value="Mur_ligase_C_dom_sf"/>
</dbReference>
<dbReference type="InterPro" id="IPR013221">
    <property type="entry name" value="Mur_ligase_cen"/>
</dbReference>
<dbReference type="InterPro" id="IPR000713">
    <property type="entry name" value="Mur_ligase_N"/>
</dbReference>
<dbReference type="InterPro" id="IPR050061">
    <property type="entry name" value="MurCDEF_pg_biosynth"/>
</dbReference>
<dbReference type="InterPro" id="IPR005758">
    <property type="entry name" value="UDP-N-AcMur_Ala_ligase_MurC"/>
</dbReference>
<dbReference type="NCBIfam" id="TIGR01082">
    <property type="entry name" value="murC"/>
    <property type="match status" value="1"/>
</dbReference>
<dbReference type="PANTHER" id="PTHR43445:SF3">
    <property type="entry name" value="UDP-N-ACETYLMURAMATE--L-ALANINE LIGASE"/>
    <property type="match status" value="1"/>
</dbReference>
<dbReference type="PANTHER" id="PTHR43445">
    <property type="entry name" value="UDP-N-ACETYLMURAMATE--L-ALANINE LIGASE-RELATED"/>
    <property type="match status" value="1"/>
</dbReference>
<dbReference type="Pfam" id="PF01225">
    <property type="entry name" value="Mur_ligase"/>
    <property type="match status" value="1"/>
</dbReference>
<dbReference type="Pfam" id="PF02875">
    <property type="entry name" value="Mur_ligase_C"/>
    <property type="match status" value="1"/>
</dbReference>
<dbReference type="Pfam" id="PF08245">
    <property type="entry name" value="Mur_ligase_M"/>
    <property type="match status" value="1"/>
</dbReference>
<dbReference type="SUPFAM" id="SSF51984">
    <property type="entry name" value="MurCD N-terminal domain"/>
    <property type="match status" value="1"/>
</dbReference>
<dbReference type="SUPFAM" id="SSF53623">
    <property type="entry name" value="MurD-like peptide ligases, catalytic domain"/>
    <property type="match status" value="1"/>
</dbReference>
<dbReference type="SUPFAM" id="SSF53244">
    <property type="entry name" value="MurD-like peptide ligases, peptide-binding domain"/>
    <property type="match status" value="1"/>
</dbReference>
<organism>
    <name type="scientific">Burkholderia mallei (strain SAVP1)</name>
    <dbReference type="NCBI Taxonomy" id="320388"/>
    <lineage>
        <taxon>Bacteria</taxon>
        <taxon>Pseudomonadati</taxon>
        <taxon>Pseudomonadota</taxon>
        <taxon>Betaproteobacteria</taxon>
        <taxon>Burkholderiales</taxon>
        <taxon>Burkholderiaceae</taxon>
        <taxon>Burkholderia</taxon>
        <taxon>pseudomallei group</taxon>
    </lineage>
</organism>
<evidence type="ECO:0000255" key="1">
    <source>
        <dbReference type="HAMAP-Rule" id="MF_00046"/>
    </source>
</evidence>
<accession>A1V0R7</accession>
<proteinExistence type="inferred from homology"/>
<sequence>MKHIVKHIHFVGIGGAGMSGIAEVLVNLGYQVSGSDLARNAVTERLEALGARVSIGHDAANIEGANAVVVSTAVRSDNPEVLAARRLRVPIVPRAVMLAELMRLKQGIAIAGTHGKTTTTSLVASVLAAGGLDPTFVIGGRLTSAGANARLGMGDFIVAEADESDASFLNLYPVIEVITNIDADHMDTYGHDFARLKQAFIEFTQRLPFYGSAVVCIDDANVRQIVPLISKPVVRYGFAADAQVRAENVEARDGRMHFTVRREGREPLPVVLNLPGLHNVQNALAAIAIATDLDVADAAIQQALAEFNGVGRRFQRYGEIAAAGGGAYTLIDDYGHHPVEMAATIAAARGAFPGRRLVLAFQPHRYTRTRDCFDDFVNVLSTVDALVLTEVYAAGEAPISTANGDALSRALRAAGKVEPVFVATVDEVPDALAKLARDGDVVITMGAGSIGGVPGKLAQDTQQKG</sequence>
<protein>
    <recommendedName>
        <fullName evidence="1">UDP-N-acetylmuramate--L-alanine ligase</fullName>
        <ecNumber evidence="1">6.3.2.8</ecNumber>
    </recommendedName>
    <alternativeName>
        <fullName evidence="1">UDP-N-acetylmuramoyl-L-alanine synthetase</fullName>
    </alternativeName>
</protein>
<reference key="1">
    <citation type="journal article" date="2010" name="Genome Biol. Evol.">
        <title>Continuing evolution of Burkholderia mallei through genome reduction and large-scale rearrangements.</title>
        <authorList>
            <person name="Losada L."/>
            <person name="Ronning C.M."/>
            <person name="DeShazer D."/>
            <person name="Woods D."/>
            <person name="Fedorova N."/>
            <person name="Kim H.S."/>
            <person name="Shabalina S.A."/>
            <person name="Pearson T.R."/>
            <person name="Brinkac L."/>
            <person name="Tan P."/>
            <person name="Nandi T."/>
            <person name="Crabtree J."/>
            <person name="Badger J."/>
            <person name="Beckstrom-Sternberg S."/>
            <person name="Saqib M."/>
            <person name="Schutzer S.E."/>
            <person name="Keim P."/>
            <person name="Nierman W.C."/>
        </authorList>
    </citation>
    <scope>NUCLEOTIDE SEQUENCE [LARGE SCALE GENOMIC DNA]</scope>
    <source>
        <strain>SAVP1</strain>
    </source>
</reference>
<name>MURC_BURMS</name>